<feature type="chain" id="PRO_0000075797" description="LIM/homeobox protein Lhx8">
    <location>
        <begin position="1"/>
        <end position="367"/>
    </location>
</feature>
<feature type="domain" description="LIM zinc-binding 1" evidence="2">
    <location>
        <begin position="96"/>
        <end position="148"/>
    </location>
</feature>
<feature type="domain" description="LIM zinc-binding 2" evidence="2">
    <location>
        <begin position="157"/>
        <end position="210"/>
    </location>
</feature>
<feature type="DNA-binding region" description="Homeobox" evidence="1">
    <location>
        <begin position="246"/>
        <end position="305"/>
    </location>
</feature>
<feature type="region of interest" description="Disordered" evidence="3">
    <location>
        <begin position="44"/>
        <end position="79"/>
    </location>
</feature>
<feature type="compositionally biased region" description="Low complexity" evidence="3">
    <location>
        <begin position="68"/>
        <end position="79"/>
    </location>
</feature>
<feature type="sequence conflict" description="In Ref. 3; CAA04012." evidence="4" ref="3">
    <original>V</original>
    <variation>M</variation>
    <location>
        <position position="18"/>
    </location>
</feature>
<feature type="sequence conflict" description="In Ref. 3; CAA04012." evidence="4" ref="3">
    <original>K</original>
    <variation>M</variation>
    <location>
        <position position="27"/>
    </location>
</feature>
<feature type="sequence conflict" description="In Ref. 3; CAA04012." evidence="4" ref="3">
    <original>LA</original>
    <variation>G</variation>
    <location>
        <begin position="42"/>
        <end position="43"/>
    </location>
</feature>
<feature type="sequence conflict" description="In Ref. 3; CAA04012." evidence="4" ref="3">
    <original>A</original>
    <variation>S</variation>
    <location>
        <position position="51"/>
    </location>
</feature>
<feature type="sequence conflict" description="In Ref. 1; BAA21649 and 3; CAA04012." evidence="4" ref="1 3">
    <original>A</original>
    <variation>G</variation>
    <location>
        <position position="72"/>
    </location>
</feature>
<feature type="sequence conflict" description="In Ref. 3; CAA04012." evidence="4" ref="3">
    <original>SV</original>
    <variation>PM</variation>
    <location>
        <begin position="87"/>
        <end position="88"/>
    </location>
</feature>
<feature type="sequence conflict" description="In Ref. 3; CAA04012." evidence="4" ref="3">
    <original>M</original>
    <variation>I</variation>
    <location>
        <position position="327"/>
    </location>
</feature>
<feature type="sequence conflict" description="In Ref. 3; CAA04012." evidence="4" ref="3">
    <original>V</original>
    <variation>D</variation>
    <location>
        <position position="337"/>
    </location>
</feature>
<feature type="sequence conflict" description="In Ref. 3; CAA04012." evidence="4" ref="3">
    <original>GT</original>
    <variation>DG</variation>
    <location>
        <begin position="341"/>
        <end position="342"/>
    </location>
</feature>
<feature type="sequence conflict" description="In Ref. 3; CAA04012." evidence="4" ref="3">
    <location>
        <position position="347"/>
    </location>
</feature>
<feature type="sequence conflict" description="In Ref. 3; CAA04012." evidence="4" ref="3">
    <original>M</original>
    <variation>L</variation>
    <location>
        <position position="351"/>
    </location>
</feature>
<accession>O35652</accession>
<accession>O70163</accession>
<accession>O88707</accession>
<accession>Q3TMT2</accession>
<sequence>MYWKSDQMFVCKLEGKEVPELAVPREKCPGLMSEECGRPAALAAGRTRKGAGEEGLVNPEGAGDEDSCSSSAPLSPSSSPQSMASGSVCPPGKCVCSSCGLEIVDKYLLKVNDLCWHVRCLSCSVCRTSLGRHTSCYIKDKDIFCKLDYFRRYGTRCSRCGRHIHSTDWVRRAKGNVYHLACFACFSCKRQLSTGEEFALVEEKVLCRVHFDCMLDNLKREVENGNGISVEGALLTEQDVNHPKPAKRARTSFTADQLQVMQAQFAQDNNPDAQTLQKLAERTGLSRRVIQVWFQNCRARHKKHVSPNHSSSAPVTAVPSSRLSPPMLEEMAYSAYVPQDGTMLTALHSYMDAHQQLLDSSPCYPIQ</sequence>
<comment type="function">
    <text>Transcription factor involved in differentiation of certain neurons and mesenchymal cells.</text>
</comment>
<comment type="subcellular location">
    <subcellularLocation>
        <location evidence="4">Nucleus</location>
    </subcellularLocation>
</comment>
<comment type="developmental stage">
    <text>Limited spatially to the medical ganglionic eminence and the mesenchyme surrounding the oral cavity and temporally from middle embryonic to early postnatal development.</text>
</comment>
<comment type="sequence caution" evidence="4">
    <conflict type="erroneous initiation">
        <sequence resource="EMBL-CDS" id="BAA21649"/>
    </conflict>
</comment>
<reference key="1">
    <citation type="journal article" date="1996" name="Neurosci. Lett.">
        <title>L3, a novel murine LIM-homeodomain transcription factor expressed in the ventral telencephalon and the mesenchyme surrounding the oral cavity.</title>
        <authorList>
            <person name="Matsumoto K."/>
            <person name="Tanaka T."/>
            <person name="Furuyama T."/>
            <person name="Kashihara Y."/>
            <person name="Mori T."/>
            <person name="Ishii N."/>
            <person name="Kitanaka J."/>
            <person name="Takemura M."/>
            <person name="Tohyama M."/>
            <person name="Wanaka A."/>
        </authorList>
    </citation>
    <scope>NUCLEOTIDE SEQUENCE [MRNA]</scope>
    <source>
        <strain>ICR</strain>
        <tissue>Brain</tissue>
    </source>
</reference>
<reference key="2">
    <citation type="journal article" date="1998" name="Genomics">
        <title>Structure and chromosomal localization of a murine LIM/homeobox gene, Lhx8.</title>
        <authorList>
            <person name="Kitanaka J."/>
            <person name="Takemura M."/>
            <person name="Matsumoto K."/>
            <person name="Mori T."/>
            <person name="Wanaka A."/>
        </authorList>
    </citation>
    <scope>NUCLEOTIDE SEQUENCE [GENOMIC DNA]</scope>
    <source>
        <strain>129/SvJ</strain>
        <tissue>Liver</tissue>
    </source>
</reference>
<reference key="3">
    <citation type="journal article" date="1998" name="Development">
        <title>Expression and regulation of Lhx6 and Lhx7, a novel subfamily of LIM homeodomain encoding genes, suggests a role in mammalian head development.</title>
        <authorList>
            <person name="Grigoriou M."/>
            <person name="Tucker A.S."/>
            <person name="Sharpe P.T."/>
            <person name="Pachnis V."/>
        </authorList>
    </citation>
    <scope>NUCLEOTIDE SEQUENCE [MRNA]</scope>
</reference>
<reference key="4">
    <citation type="journal article" date="2005" name="Science">
        <title>The transcriptional landscape of the mammalian genome.</title>
        <authorList>
            <person name="Carninci P."/>
            <person name="Kasukawa T."/>
            <person name="Katayama S."/>
            <person name="Gough J."/>
            <person name="Frith M.C."/>
            <person name="Maeda N."/>
            <person name="Oyama R."/>
            <person name="Ravasi T."/>
            <person name="Lenhard B."/>
            <person name="Wells C."/>
            <person name="Kodzius R."/>
            <person name="Shimokawa K."/>
            <person name="Bajic V.B."/>
            <person name="Brenner S.E."/>
            <person name="Batalov S."/>
            <person name="Forrest A.R."/>
            <person name="Zavolan M."/>
            <person name="Davis M.J."/>
            <person name="Wilming L.G."/>
            <person name="Aidinis V."/>
            <person name="Allen J.E."/>
            <person name="Ambesi-Impiombato A."/>
            <person name="Apweiler R."/>
            <person name="Aturaliya R.N."/>
            <person name="Bailey T.L."/>
            <person name="Bansal M."/>
            <person name="Baxter L."/>
            <person name="Beisel K.W."/>
            <person name="Bersano T."/>
            <person name="Bono H."/>
            <person name="Chalk A.M."/>
            <person name="Chiu K.P."/>
            <person name="Choudhary V."/>
            <person name="Christoffels A."/>
            <person name="Clutterbuck D.R."/>
            <person name="Crowe M.L."/>
            <person name="Dalla E."/>
            <person name="Dalrymple B.P."/>
            <person name="de Bono B."/>
            <person name="Della Gatta G."/>
            <person name="di Bernardo D."/>
            <person name="Down T."/>
            <person name="Engstrom P."/>
            <person name="Fagiolini M."/>
            <person name="Faulkner G."/>
            <person name="Fletcher C.F."/>
            <person name="Fukushima T."/>
            <person name="Furuno M."/>
            <person name="Futaki S."/>
            <person name="Gariboldi M."/>
            <person name="Georgii-Hemming P."/>
            <person name="Gingeras T.R."/>
            <person name="Gojobori T."/>
            <person name="Green R.E."/>
            <person name="Gustincich S."/>
            <person name="Harbers M."/>
            <person name="Hayashi Y."/>
            <person name="Hensch T.K."/>
            <person name="Hirokawa N."/>
            <person name="Hill D."/>
            <person name="Huminiecki L."/>
            <person name="Iacono M."/>
            <person name="Ikeo K."/>
            <person name="Iwama A."/>
            <person name="Ishikawa T."/>
            <person name="Jakt M."/>
            <person name="Kanapin A."/>
            <person name="Katoh M."/>
            <person name="Kawasawa Y."/>
            <person name="Kelso J."/>
            <person name="Kitamura H."/>
            <person name="Kitano H."/>
            <person name="Kollias G."/>
            <person name="Krishnan S.P."/>
            <person name="Kruger A."/>
            <person name="Kummerfeld S.K."/>
            <person name="Kurochkin I.V."/>
            <person name="Lareau L.F."/>
            <person name="Lazarevic D."/>
            <person name="Lipovich L."/>
            <person name="Liu J."/>
            <person name="Liuni S."/>
            <person name="McWilliam S."/>
            <person name="Madan Babu M."/>
            <person name="Madera M."/>
            <person name="Marchionni L."/>
            <person name="Matsuda H."/>
            <person name="Matsuzawa S."/>
            <person name="Miki H."/>
            <person name="Mignone F."/>
            <person name="Miyake S."/>
            <person name="Morris K."/>
            <person name="Mottagui-Tabar S."/>
            <person name="Mulder N."/>
            <person name="Nakano N."/>
            <person name="Nakauchi H."/>
            <person name="Ng P."/>
            <person name="Nilsson R."/>
            <person name="Nishiguchi S."/>
            <person name="Nishikawa S."/>
            <person name="Nori F."/>
            <person name="Ohara O."/>
            <person name="Okazaki Y."/>
            <person name="Orlando V."/>
            <person name="Pang K.C."/>
            <person name="Pavan W.J."/>
            <person name="Pavesi G."/>
            <person name="Pesole G."/>
            <person name="Petrovsky N."/>
            <person name="Piazza S."/>
            <person name="Reed J."/>
            <person name="Reid J.F."/>
            <person name="Ring B.Z."/>
            <person name="Ringwald M."/>
            <person name="Rost B."/>
            <person name="Ruan Y."/>
            <person name="Salzberg S.L."/>
            <person name="Sandelin A."/>
            <person name="Schneider C."/>
            <person name="Schoenbach C."/>
            <person name="Sekiguchi K."/>
            <person name="Semple C.A."/>
            <person name="Seno S."/>
            <person name="Sessa L."/>
            <person name="Sheng Y."/>
            <person name="Shibata Y."/>
            <person name="Shimada H."/>
            <person name="Shimada K."/>
            <person name="Silva D."/>
            <person name="Sinclair B."/>
            <person name="Sperling S."/>
            <person name="Stupka E."/>
            <person name="Sugiura K."/>
            <person name="Sultana R."/>
            <person name="Takenaka Y."/>
            <person name="Taki K."/>
            <person name="Tammoja K."/>
            <person name="Tan S.L."/>
            <person name="Tang S."/>
            <person name="Taylor M.S."/>
            <person name="Tegner J."/>
            <person name="Teichmann S.A."/>
            <person name="Ueda H.R."/>
            <person name="van Nimwegen E."/>
            <person name="Verardo R."/>
            <person name="Wei C.L."/>
            <person name="Yagi K."/>
            <person name="Yamanishi H."/>
            <person name="Zabarovsky E."/>
            <person name="Zhu S."/>
            <person name="Zimmer A."/>
            <person name="Hide W."/>
            <person name="Bult C."/>
            <person name="Grimmond S.M."/>
            <person name="Teasdale R.D."/>
            <person name="Liu E.T."/>
            <person name="Brusic V."/>
            <person name="Quackenbush J."/>
            <person name="Wahlestedt C."/>
            <person name="Mattick J.S."/>
            <person name="Hume D.A."/>
            <person name="Kai C."/>
            <person name="Sasaki D."/>
            <person name="Tomaru Y."/>
            <person name="Fukuda S."/>
            <person name="Kanamori-Katayama M."/>
            <person name="Suzuki M."/>
            <person name="Aoki J."/>
            <person name="Arakawa T."/>
            <person name="Iida J."/>
            <person name="Imamura K."/>
            <person name="Itoh M."/>
            <person name="Kato T."/>
            <person name="Kawaji H."/>
            <person name="Kawagashira N."/>
            <person name="Kawashima T."/>
            <person name="Kojima M."/>
            <person name="Kondo S."/>
            <person name="Konno H."/>
            <person name="Nakano K."/>
            <person name="Ninomiya N."/>
            <person name="Nishio T."/>
            <person name="Okada M."/>
            <person name="Plessy C."/>
            <person name="Shibata K."/>
            <person name="Shiraki T."/>
            <person name="Suzuki S."/>
            <person name="Tagami M."/>
            <person name="Waki K."/>
            <person name="Watahiki A."/>
            <person name="Okamura-Oho Y."/>
            <person name="Suzuki H."/>
            <person name="Kawai J."/>
            <person name="Hayashizaki Y."/>
        </authorList>
    </citation>
    <scope>NUCLEOTIDE SEQUENCE [LARGE SCALE MRNA]</scope>
    <source>
        <strain>C57BL/6J</strain>
        <tissue>Lymph node</tissue>
    </source>
</reference>
<reference key="5">
    <citation type="submission" date="2005-09" db="EMBL/GenBank/DDBJ databases">
        <authorList>
            <person name="Mural R.J."/>
            <person name="Adams M.D."/>
            <person name="Myers E.W."/>
            <person name="Smith H.O."/>
            <person name="Venter J.C."/>
        </authorList>
    </citation>
    <scope>NUCLEOTIDE SEQUENCE [LARGE SCALE GENOMIC DNA]</scope>
</reference>
<reference key="6">
    <citation type="journal article" date="2004" name="Genome Res.">
        <title>The status, quality, and expansion of the NIH full-length cDNA project: the Mammalian Gene Collection (MGC).</title>
        <authorList>
            <consortium name="The MGC Project Team"/>
        </authorList>
    </citation>
    <scope>NUCLEOTIDE SEQUENCE [LARGE SCALE MRNA]</scope>
    <source>
        <tissue>Brain</tissue>
    </source>
</reference>
<gene>
    <name type="primary">Lhx8</name>
    <name type="synonym">Lhx7</name>
</gene>
<name>LHX8_MOUSE</name>
<dbReference type="EMBL" id="D49658">
    <property type="protein sequence ID" value="BAA21649.1"/>
    <property type="status" value="ALT_INIT"/>
    <property type="molecule type" value="mRNA"/>
</dbReference>
<dbReference type="EMBL" id="AB007596">
    <property type="protein sequence ID" value="BAA28628.1"/>
    <property type="molecule type" value="Genomic_DNA"/>
</dbReference>
<dbReference type="EMBL" id="AJ000338">
    <property type="protein sequence ID" value="CAA04012.1"/>
    <property type="molecule type" value="mRNA"/>
</dbReference>
<dbReference type="EMBL" id="AK165733">
    <property type="protein sequence ID" value="BAE38359.1"/>
    <property type="molecule type" value="mRNA"/>
</dbReference>
<dbReference type="EMBL" id="CH466532">
    <property type="protein sequence ID" value="EDL11894.1"/>
    <property type="molecule type" value="Genomic_DNA"/>
</dbReference>
<dbReference type="EMBL" id="BC125281">
    <property type="protein sequence ID" value="AAI25282.1"/>
    <property type="molecule type" value="mRNA"/>
</dbReference>
<dbReference type="EMBL" id="BC125283">
    <property type="protein sequence ID" value="AAI25284.1"/>
    <property type="molecule type" value="mRNA"/>
</dbReference>
<dbReference type="EMBL" id="BC144768">
    <property type="protein sequence ID" value="AAI44769.1"/>
    <property type="molecule type" value="mRNA"/>
</dbReference>
<dbReference type="CCDS" id="CCDS17926.1"/>
<dbReference type="RefSeq" id="NP_034843.2">
    <property type="nucleotide sequence ID" value="NM_010713.3"/>
</dbReference>
<dbReference type="SMR" id="O35652"/>
<dbReference type="BioGRID" id="201160">
    <property type="interactions" value="2"/>
</dbReference>
<dbReference type="CORUM" id="O35652"/>
<dbReference type="FunCoup" id="O35652">
    <property type="interactions" value="1556"/>
</dbReference>
<dbReference type="STRING" id="10090.ENSMUSP00000136047"/>
<dbReference type="PhosphoSitePlus" id="O35652"/>
<dbReference type="PaxDb" id="10090-ENSMUSP00000136047"/>
<dbReference type="Antibodypedia" id="33466">
    <property type="antibodies" value="201 antibodies from 28 providers"/>
</dbReference>
<dbReference type="DNASU" id="16875"/>
<dbReference type="Ensembl" id="ENSMUST00000177846.8">
    <property type="protein sequence ID" value="ENSMUSP00000136047.2"/>
    <property type="gene ID" value="ENSMUSG00000096225.8"/>
</dbReference>
<dbReference type="GeneID" id="16875"/>
<dbReference type="KEGG" id="mmu:16875"/>
<dbReference type="UCSC" id="uc008rum.1">
    <property type="organism name" value="mouse"/>
</dbReference>
<dbReference type="AGR" id="MGI:1096343"/>
<dbReference type="CTD" id="431707"/>
<dbReference type="MGI" id="MGI:1096343">
    <property type="gene designation" value="Lhx8"/>
</dbReference>
<dbReference type="VEuPathDB" id="HostDB:ENSMUSG00000096225"/>
<dbReference type="eggNOG" id="KOG0490">
    <property type="taxonomic scope" value="Eukaryota"/>
</dbReference>
<dbReference type="GeneTree" id="ENSGT00940000156200"/>
<dbReference type="HOGENOM" id="CLU_027802_1_0_1"/>
<dbReference type="InParanoid" id="O35652"/>
<dbReference type="OrthoDB" id="125004at2759"/>
<dbReference type="PhylomeDB" id="O35652"/>
<dbReference type="TreeFam" id="TF315442"/>
<dbReference type="BioGRID-ORCS" id="16875">
    <property type="hits" value="3 hits in 78 CRISPR screens"/>
</dbReference>
<dbReference type="ChiTaRS" id="Lhx8">
    <property type="organism name" value="mouse"/>
</dbReference>
<dbReference type="PRO" id="PR:O35652"/>
<dbReference type="Proteomes" id="UP000000589">
    <property type="component" value="Chromosome 3"/>
</dbReference>
<dbReference type="RNAct" id="O35652">
    <property type="molecule type" value="protein"/>
</dbReference>
<dbReference type="Bgee" id="ENSMUSG00000096225">
    <property type="expression patterns" value="Expressed in primary oocyte and 106 other cell types or tissues"/>
</dbReference>
<dbReference type="ExpressionAtlas" id="O35652">
    <property type="expression patterns" value="baseline and differential"/>
</dbReference>
<dbReference type="GO" id="GO:0001674">
    <property type="term" value="C:female germ cell nucleus"/>
    <property type="evidence" value="ECO:0000314"/>
    <property type="project" value="MGI"/>
</dbReference>
<dbReference type="GO" id="GO:0003677">
    <property type="term" value="F:DNA binding"/>
    <property type="evidence" value="ECO:0007669"/>
    <property type="project" value="UniProtKB-KW"/>
</dbReference>
<dbReference type="GO" id="GO:0000981">
    <property type="term" value="F:DNA-binding transcription factor activity, RNA polymerase II-specific"/>
    <property type="evidence" value="ECO:0007669"/>
    <property type="project" value="InterPro"/>
</dbReference>
<dbReference type="GO" id="GO:0046872">
    <property type="term" value="F:metal ion binding"/>
    <property type="evidence" value="ECO:0007669"/>
    <property type="project" value="UniProtKB-KW"/>
</dbReference>
<dbReference type="GO" id="GO:0008585">
    <property type="term" value="P:female gonad development"/>
    <property type="evidence" value="ECO:0000315"/>
    <property type="project" value="MGI"/>
</dbReference>
<dbReference type="GO" id="GO:0021884">
    <property type="term" value="P:forebrain neuron development"/>
    <property type="evidence" value="ECO:0000316"/>
    <property type="project" value="MGI"/>
</dbReference>
<dbReference type="GO" id="GO:0021879">
    <property type="term" value="P:forebrain neuron differentiation"/>
    <property type="evidence" value="ECO:0000315"/>
    <property type="project" value="MGI"/>
</dbReference>
<dbReference type="GO" id="GO:0007611">
    <property type="term" value="P:learning or memory"/>
    <property type="evidence" value="ECO:0000315"/>
    <property type="project" value="MGI"/>
</dbReference>
<dbReference type="GO" id="GO:0042475">
    <property type="term" value="P:odontogenesis of dentin-containing tooth"/>
    <property type="evidence" value="ECO:0000315"/>
    <property type="project" value="MGI"/>
</dbReference>
<dbReference type="CDD" id="cd00086">
    <property type="entry name" value="homeodomain"/>
    <property type="match status" value="1"/>
</dbReference>
<dbReference type="CDD" id="cd09381">
    <property type="entry name" value="LIM1_Lhx7_Lhx8"/>
    <property type="match status" value="1"/>
</dbReference>
<dbReference type="CDD" id="cd09383">
    <property type="entry name" value="LIM2_Lhx7_Lhx8"/>
    <property type="match status" value="1"/>
</dbReference>
<dbReference type="FunFam" id="1.10.10.60:FF:000050">
    <property type="entry name" value="LIM homeobox 6"/>
    <property type="match status" value="1"/>
</dbReference>
<dbReference type="FunFam" id="2.10.110.10:FF:000023">
    <property type="entry name" value="LIM homeobox 6"/>
    <property type="match status" value="1"/>
</dbReference>
<dbReference type="FunFam" id="2.10.110.10:FF:000031">
    <property type="entry name" value="LIM homeobox 6, isoform CRA_b"/>
    <property type="match status" value="1"/>
</dbReference>
<dbReference type="Gene3D" id="2.10.110.10">
    <property type="entry name" value="Cysteine Rich Protein"/>
    <property type="match status" value="2"/>
</dbReference>
<dbReference type="Gene3D" id="1.10.10.60">
    <property type="entry name" value="Homeodomain-like"/>
    <property type="match status" value="1"/>
</dbReference>
<dbReference type="InterPro" id="IPR001356">
    <property type="entry name" value="HD"/>
</dbReference>
<dbReference type="InterPro" id="IPR017970">
    <property type="entry name" value="Homeobox_CS"/>
</dbReference>
<dbReference type="InterPro" id="IPR009057">
    <property type="entry name" value="Homeodomain-like_sf"/>
</dbReference>
<dbReference type="InterPro" id="IPR050453">
    <property type="entry name" value="LIM_Homeobox_TF"/>
</dbReference>
<dbReference type="InterPro" id="IPR001781">
    <property type="entry name" value="Znf_LIM"/>
</dbReference>
<dbReference type="PANTHER" id="PTHR24208">
    <property type="entry name" value="LIM/HOMEOBOX PROTEIN LHX"/>
    <property type="match status" value="1"/>
</dbReference>
<dbReference type="PANTHER" id="PTHR24208:SF117">
    <property type="entry name" value="LIM_HOMEOBOX PROTEIN LHX8"/>
    <property type="match status" value="1"/>
</dbReference>
<dbReference type="Pfam" id="PF00046">
    <property type="entry name" value="Homeodomain"/>
    <property type="match status" value="1"/>
</dbReference>
<dbReference type="Pfam" id="PF00412">
    <property type="entry name" value="LIM"/>
    <property type="match status" value="2"/>
</dbReference>
<dbReference type="SMART" id="SM00389">
    <property type="entry name" value="HOX"/>
    <property type="match status" value="1"/>
</dbReference>
<dbReference type="SMART" id="SM00132">
    <property type="entry name" value="LIM"/>
    <property type="match status" value="2"/>
</dbReference>
<dbReference type="SUPFAM" id="SSF57716">
    <property type="entry name" value="Glucocorticoid receptor-like (DNA-binding domain)"/>
    <property type="match status" value="2"/>
</dbReference>
<dbReference type="SUPFAM" id="SSF46689">
    <property type="entry name" value="Homeodomain-like"/>
    <property type="match status" value="1"/>
</dbReference>
<dbReference type="PROSITE" id="PS00027">
    <property type="entry name" value="HOMEOBOX_1"/>
    <property type="match status" value="1"/>
</dbReference>
<dbReference type="PROSITE" id="PS50071">
    <property type="entry name" value="HOMEOBOX_2"/>
    <property type="match status" value="1"/>
</dbReference>
<dbReference type="PROSITE" id="PS00478">
    <property type="entry name" value="LIM_DOMAIN_1"/>
    <property type="match status" value="2"/>
</dbReference>
<dbReference type="PROSITE" id="PS50023">
    <property type="entry name" value="LIM_DOMAIN_2"/>
    <property type="match status" value="2"/>
</dbReference>
<protein>
    <recommendedName>
        <fullName>LIM/homeobox protein Lhx8</fullName>
        <shortName>LIM homeobox protein 8</shortName>
    </recommendedName>
    <alternativeName>
        <fullName>L3</fullName>
    </alternativeName>
    <alternativeName>
        <fullName>LIM/homeobox protein Lhx7</fullName>
        <shortName>LIM homeobox protein 7</shortName>
    </alternativeName>
</protein>
<proteinExistence type="evidence at transcript level"/>
<keyword id="KW-0238">DNA-binding</keyword>
<keyword id="KW-0371">Homeobox</keyword>
<keyword id="KW-0440">LIM domain</keyword>
<keyword id="KW-0479">Metal-binding</keyword>
<keyword id="KW-0539">Nucleus</keyword>
<keyword id="KW-1185">Reference proteome</keyword>
<keyword id="KW-0677">Repeat</keyword>
<keyword id="KW-0804">Transcription</keyword>
<keyword id="KW-0805">Transcription regulation</keyword>
<keyword id="KW-0862">Zinc</keyword>
<organism>
    <name type="scientific">Mus musculus</name>
    <name type="common">Mouse</name>
    <dbReference type="NCBI Taxonomy" id="10090"/>
    <lineage>
        <taxon>Eukaryota</taxon>
        <taxon>Metazoa</taxon>
        <taxon>Chordata</taxon>
        <taxon>Craniata</taxon>
        <taxon>Vertebrata</taxon>
        <taxon>Euteleostomi</taxon>
        <taxon>Mammalia</taxon>
        <taxon>Eutheria</taxon>
        <taxon>Euarchontoglires</taxon>
        <taxon>Glires</taxon>
        <taxon>Rodentia</taxon>
        <taxon>Myomorpha</taxon>
        <taxon>Muroidea</taxon>
        <taxon>Muridae</taxon>
        <taxon>Murinae</taxon>
        <taxon>Mus</taxon>
        <taxon>Mus</taxon>
    </lineage>
</organism>
<evidence type="ECO:0000255" key="1">
    <source>
        <dbReference type="PROSITE-ProRule" id="PRU00108"/>
    </source>
</evidence>
<evidence type="ECO:0000255" key="2">
    <source>
        <dbReference type="PROSITE-ProRule" id="PRU00125"/>
    </source>
</evidence>
<evidence type="ECO:0000256" key="3">
    <source>
        <dbReference type="SAM" id="MobiDB-lite"/>
    </source>
</evidence>
<evidence type="ECO:0000305" key="4"/>